<name>RS18_ARGIR</name>
<protein>
    <recommendedName>
        <fullName evidence="2">Small ribosomal subunit protein uS13</fullName>
    </recommendedName>
    <alternativeName>
        <fullName>40S ribosomal protein S18</fullName>
    </alternativeName>
</protein>
<organism>
    <name type="scientific">Argopecten irradians</name>
    <name type="common">Bay scallop</name>
    <name type="synonym">Aequipecten irradians</name>
    <dbReference type="NCBI Taxonomy" id="31199"/>
    <lineage>
        <taxon>Eukaryota</taxon>
        <taxon>Metazoa</taxon>
        <taxon>Spiralia</taxon>
        <taxon>Lophotrochozoa</taxon>
        <taxon>Mollusca</taxon>
        <taxon>Bivalvia</taxon>
        <taxon>Autobranchia</taxon>
        <taxon>Pteriomorphia</taxon>
        <taxon>Pectinida</taxon>
        <taxon>Pectinoidea</taxon>
        <taxon>Pectinidae</taxon>
        <taxon>Argopecten</taxon>
    </lineage>
</organism>
<accession>Q8IT98</accession>
<comment type="function">
    <text evidence="1">Located at the top of the head of the 40S subunit, it contacts several helices of the 18S rRNA.</text>
</comment>
<comment type="subcellular location">
    <subcellularLocation>
        <location>Cytoplasm</location>
    </subcellularLocation>
</comment>
<comment type="similarity">
    <text evidence="2">Belongs to the universal ribosomal protein uS13 family.</text>
</comment>
<sequence>MALIIPEKFQHILRVMNTNIDGKRKIMFAMTAIKGMGRRYANVVCKKADVDITKRAGELSEDEIERVITIMSNPRQYKIPNWFLNRQKDVKDGKYSQVMSNALDNKLREDLERLKKIRAHRGLRHYWGLRVRGQHTKTTGRRGRTVGVAKKK</sequence>
<feature type="chain" id="PRO_0000132218" description="Small ribosomal subunit protein uS13">
    <location>
        <begin position="1"/>
        <end position="152"/>
    </location>
</feature>
<proteinExistence type="evidence at transcript level"/>
<keyword id="KW-0963">Cytoplasm</keyword>
<keyword id="KW-0687">Ribonucleoprotein</keyword>
<keyword id="KW-0689">Ribosomal protein</keyword>
<keyword id="KW-0694">RNA-binding</keyword>
<keyword id="KW-0699">rRNA-binding</keyword>
<reference key="1">
    <citation type="submission" date="2002-07" db="EMBL/GenBank/DDBJ databases">
        <authorList>
            <person name="Song L."/>
            <person name="Xu W."/>
            <person name="Li H."/>
            <person name="Guo X."/>
            <person name="Xiang J."/>
            <person name="Cui Z."/>
            <person name="Cai Z."/>
        </authorList>
    </citation>
    <scope>NUCLEOTIDE SEQUENCE [MRNA]</scope>
</reference>
<gene>
    <name type="primary">RPS18</name>
</gene>
<evidence type="ECO:0000250" key="1"/>
<evidence type="ECO:0000305" key="2"/>
<dbReference type="EMBL" id="AF526232">
    <property type="protein sequence ID" value="AAN05613.1"/>
    <property type="molecule type" value="mRNA"/>
</dbReference>
<dbReference type="SMR" id="Q8IT98"/>
<dbReference type="GO" id="GO:0005829">
    <property type="term" value="C:cytosol"/>
    <property type="evidence" value="ECO:0007669"/>
    <property type="project" value="TreeGrafter"/>
</dbReference>
<dbReference type="GO" id="GO:0015935">
    <property type="term" value="C:small ribosomal subunit"/>
    <property type="evidence" value="ECO:0007669"/>
    <property type="project" value="TreeGrafter"/>
</dbReference>
<dbReference type="GO" id="GO:0019843">
    <property type="term" value="F:rRNA binding"/>
    <property type="evidence" value="ECO:0007669"/>
    <property type="project" value="UniProtKB-KW"/>
</dbReference>
<dbReference type="GO" id="GO:0003735">
    <property type="term" value="F:structural constituent of ribosome"/>
    <property type="evidence" value="ECO:0007669"/>
    <property type="project" value="InterPro"/>
</dbReference>
<dbReference type="GO" id="GO:0006412">
    <property type="term" value="P:translation"/>
    <property type="evidence" value="ECO:0007669"/>
    <property type="project" value="InterPro"/>
</dbReference>
<dbReference type="FunFam" id="1.10.8.50:FF:000002">
    <property type="entry name" value="40S ribosomal protein S18"/>
    <property type="match status" value="1"/>
</dbReference>
<dbReference type="FunFam" id="4.10.910.10:FF:000002">
    <property type="entry name" value="40S ribosomal protein S18"/>
    <property type="match status" value="1"/>
</dbReference>
<dbReference type="Gene3D" id="1.10.8.50">
    <property type="match status" value="1"/>
</dbReference>
<dbReference type="Gene3D" id="4.10.910.10">
    <property type="entry name" value="30s ribosomal protein s13, domain 2"/>
    <property type="match status" value="1"/>
</dbReference>
<dbReference type="HAMAP" id="MF_01315">
    <property type="entry name" value="Ribosomal_uS13"/>
    <property type="match status" value="1"/>
</dbReference>
<dbReference type="InterPro" id="IPR027437">
    <property type="entry name" value="Rbsml_uS13_C"/>
</dbReference>
<dbReference type="InterPro" id="IPR001892">
    <property type="entry name" value="Ribosomal_uS13"/>
</dbReference>
<dbReference type="InterPro" id="IPR010979">
    <property type="entry name" value="Ribosomal_uS13-like_H2TH"/>
</dbReference>
<dbReference type="InterPro" id="IPR018269">
    <property type="entry name" value="Ribosomal_uS13_CS"/>
</dbReference>
<dbReference type="NCBIfam" id="NF003140">
    <property type="entry name" value="PRK04053.1"/>
    <property type="match status" value="1"/>
</dbReference>
<dbReference type="PANTHER" id="PTHR10871">
    <property type="entry name" value="30S RIBOSOMAL PROTEIN S13/40S RIBOSOMAL PROTEIN S18"/>
    <property type="match status" value="1"/>
</dbReference>
<dbReference type="PANTHER" id="PTHR10871:SF3">
    <property type="entry name" value="SMALL RIBOSOMAL SUBUNIT PROTEIN US13"/>
    <property type="match status" value="1"/>
</dbReference>
<dbReference type="Pfam" id="PF00416">
    <property type="entry name" value="Ribosomal_S13"/>
    <property type="match status" value="1"/>
</dbReference>
<dbReference type="PIRSF" id="PIRSF002134">
    <property type="entry name" value="Ribosomal_S13"/>
    <property type="match status" value="1"/>
</dbReference>
<dbReference type="SUPFAM" id="SSF46946">
    <property type="entry name" value="S13-like H2TH domain"/>
    <property type="match status" value="1"/>
</dbReference>
<dbReference type="PROSITE" id="PS00646">
    <property type="entry name" value="RIBOSOMAL_S13_1"/>
    <property type="match status" value="1"/>
</dbReference>
<dbReference type="PROSITE" id="PS50159">
    <property type="entry name" value="RIBOSOMAL_S13_2"/>
    <property type="match status" value="1"/>
</dbReference>